<gene>
    <name evidence="1" type="primary">ispF</name>
    <name type="ordered locus">MT3687</name>
</gene>
<proteinExistence type="inferred from homology"/>
<name>ISPF_MYCTO</name>
<organism>
    <name type="scientific">Mycobacterium tuberculosis (strain CDC 1551 / Oshkosh)</name>
    <dbReference type="NCBI Taxonomy" id="83331"/>
    <lineage>
        <taxon>Bacteria</taxon>
        <taxon>Bacillati</taxon>
        <taxon>Actinomycetota</taxon>
        <taxon>Actinomycetes</taxon>
        <taxon>Mycobacteriales</taxon>
        <taxon>Mycobacteriaceae</taxon>
        <taxon>Mycobacterium</taxon>
        <taxon>Mycobacterium tuberculosis complex</taxon>
    </lineage>
</organism>
<evidence type="ECO:0000255" key="1">
    <source>
        <dbReference type="HAMAP-Rule" id="MF_00107"/>
    </source>
</evidence>
<evidence type="ECO:0000305" key="2"/>
<feature type="chain" id="PRO_0000427658" description="2-C-methyl-D-erythritol 2,4-cyclodiphosphate synthase">
    <location>
        <begin position="1"/>
        <end position="159"/>
    </location>
</feature>
<feature type="binding site" evidence="1">
    <location>
        <begin position="12"/>
        <end position="14"/>
    </location>
    <ligand>
        <name>4-CDP-2-C-methyl-D-erythritol 2-phosphate</name>
        <dbReference type="ChEBI" id="CHEBI:57919"/>
    </ligand>
</feature>
<feature type="binding site" evidence="1">
    <location>
        <position position="12"/>
    </location>
    <ligand>
        <name>a divalent metal cation</name>
        <dbReference type="ChEBI" id="CHEBI:60240"/>
    </ligand>
</feature>
<feature type="binding site" evidence="1">
    <location>
        <position position="14"/>
    </location>
    <ligand>
        <name>a divalent metal cation</name>
        <dbReference type="ChEBI" id="CHEBI:60240"/>
    </ligand>
</feature>
<feature type="binding site" evidence="1">
    <location>
        <begin position="38"/>
        <end position="39"/>
    </location>
    <ligand>
        <name>4-CDP-2-C-methyl-D-erythritol 2-phosphate</name>
        <dbReference type="ChEBI" id="CHEBI:57919"/>
    </ligand>
</feature>
<feature type="binding site" evidence="1">
    <location>
        <position position="46"/>
    </location>
    <ligand>
        <name>a divalent metal cation</name>
        <dbReference type="ChEBI" id="CHEBI:60240"/>
    </ligand>
</feature>
<feature type="binding site" evidence="1">
    <location>
        <begin position="60"/>
        <end position="62"/>
    </location>
    <ligand>
        <name>4-CDP-2-C-methyl-D-erythritol 2-phosphate</name>
        <dbReference type="ChEBI" id="CHEBI:57919"/>
    </ligand>
</feature>
<feature type="binding site" evidence="1">
    <location>
        <begin position="133"/>
        <end position="136"/>
    </location>
    <ligand>
        <name>4-CDP-2-C-methyl-D-erythritol 2-phosphate</name>
        <dbReference type="ChEBI" id="CHEBI:57919"/>
    </ligand>
</feature>
<feature type="binding site" evidence="1">
    <location>
        <position position="143"/>
    </location>
    <ligand>
        <name>4-CDP-2-C-methyl-D-erythritol 2-phosphate</name>
        <dbReference type="ChEBI" id="CHEBI:57919"/>
    </ligand>
</feature>
<feature type="site" description="Transition state stabilizer" evidence="1">
    <location>
        <position position="38"/>
    </location>
</feature>
<feature type="site" description="Transition state stabilizer" evidence="1">
    <location>
        <position position="134"/>
    </location>
</feature>
<dbReference type="EC" id="4.6.1.12" evidence="1"/>
<dbReference type="EMBL" id="AE000516">
    <property type="protein sequence ID" value="AAK48045.1"/>
    <property type="molecule type" value="Genomic_DNA"/>
</dbReference>
<dbReference type="PIR" id="C70607">
    <property type="entry name" value="C70607"/>
</dbReference>
<dbReference type="RefSeq" id="WP_003419432.1">
    <property type="nucleotide sequence ID" value="NZ_KK341227.1"/>
</dbReference>
<dbReference type="SMR" id="P9WKG4"/>
<dbReference type="GeneID" id="45427569"/>
<dbReference type="KEGG" id="mtc:MT3687"/>
<dbReference type="PATRIC" id="fig|83331.31.peg.3970"/>
<dbReference type="HOGENOM" id="CLU_084630_1_0_11"/>
<dbReference type="UniPathway" id="UPA00056">
    <property type="reaction ID" value="UER00095"/>
</dbReference>
<dbReference type="Proteomes" id="UP000001020">
    <property type="component" value="Chromosome"/>
</dbReference>
<dbReference type="GO" id="GO:0008685">
    <property type="term" value="F:2-C-methyl-D-erythritol 2,4-cyclodiphosphate synthase activity"/>
    <property type="evidence" value="ECO:0007669"/>
    <property type="project" value="UniProtKB-UniRule"/>
</dbReference>
<dbReference type="GO" id="GO:0046872">
    <property type="term" value="F:metal ion binding"/>
    <property type="evidence" value="ECO:0007669"/>
    <property type="project" value="UniProtKB-KW"/>
</dbReference>
<dbReference type="GO" id="GO:0019288">
    <property type="term" value="P:isopentenyl diphosphate biosynthetic process, methylerythritol 4-phosphate pathway"/>
    <property type="evidence" value="ECO:0007669"/>
    <property type="project" value="UniProtKB-UniRule"/>
</dbReference>
<dbReference type="GO" id="GO:0016114">
    <property type="term" value="P:terpenoid biosynthetic process"/>
    <property type="evidence" value="ECO:0007669"/>
    <property type="project" value="InterPro"/>
</dbReference>
<dbReference type="CDD" id="cd00554">
    <property type="entry name" value="MECDP_synthase"/>
    <property type="match status" value="1"/>
</dbReference>
<dbReference type="FunFam" id="3.30.1330.50:FF:000003">
    <property type="entry name" value="2-C-methyl-D-erythritol 2,4-cyclodiphosphate synthase"/>
    <property type="match status" value="1"/>
</dbReference>
<dbReference type="Gene3D" id="3.30.1330.50">
    <property type="entry name" value="2-C-methyl-D-erythritol 2,4-cyclodiphosphate synthase"/>
    <property type="match status" value="1"/>
</dbReference>
<dbReference type="HAMAP" id="MF_00107">
    <property type="entry name" value="IspF"/>
    <property type="match status" value="1"/>
</dbReference>
<dbReference type="InterPro" id="IPR003526">
    <property type="entry name" value="MECDP_synthase"/>
</dbReference>
<dbReference type="InterPro" id="IPR020555">
    <property type="entry name" value="MECDP_synthase_CS"/>
</dbReference>
<dbReference type="InterPro" id="IPR036571">
    <property type="entry name" value="MECDP_synthase_sf"/>
</dbReference>
<dbReference type="NCBIfam" id="TIGR00151">
    <property type="entry name" value="ispF"/>
    <property type="match status" value="1"/>
</dbReference>
<dbReference type="PANTHER" id="PTHR43181">
    <property type="entry name" value="2-C-METHYL-D-ERYTHRITOL 2,4-CYCLODIPHOSPHATE SYNTHASE, CHLOROPLASTIC"/>
    <property type="match status" value="1"/>
</dbReference>
<dbReference type="PANTHER" id="PTHR43181:SF1">
    <property type="entry name" value="2-C-METHYL-D-ERYTHRITOL 2,4-CYCLODIPHOSPHATE SYNTHASE, CHLOROPLASTIC"/>
    <property type="match status" value="1"/>
</dbReference>
<dbReference type="Pfam" id="PF02542">
    <property type="entry name" value="YgbB"/>
    <property type="match status" value="1"/>
</dbReference>
<dbReference type="SUPFAM" id="SSF69765">
    <property type="entry name" value="IpsF-like"/>
    <property type="match status" value="1"/>
</dbReference>
<dbReference type="PROSITE" id="PS01350">
    <property type="entry name" value="ISPF"/>
    <property type="match status" value="1"/>
</dbReference>
<reference key="1">
    <citation type="journal article" date="2002" name="J. Bacteriol.">
        <title>Whole-genome comparison of Mycobacterium tuberculosis clinical and laboratory strains.</title>
        <authorList>
            <person name="Fleischmann R.D."/>
            <person name="Alland D."/>
            <person name="Eisen J.A."/>
            <person name="Carpenter L."/>
            <person name="White O."/>
            <person name="Peterson J.D."/>
            <person name="DeBoy R.T."/>
            <person name="Dodson R.J."/>
            <person name="Gwinn M.L."/>
            <person name="Haft D.H."/>
            <person name="Hickey E.K."/>
            <person name="Kolonay J.F."/>
            <person name="Nelson W.C."/>
            <person name="Umayam L.A."/>
            <person name="Ermolaeva M.D."/>
            <person name="Salzberg S.L."/>
            <person name="Delcher A."/>
            <person name="Utterback T.R."/>
            <person name="Weidman J.F."/>
            <person name="Khouri H.M."/>
            <person name="Gill J."/>
            <person name="Mikula A."/>
            <person name="Bishai W."/>
            <person name="Jacobs W.R. Jr."/>
            <person name="Venter J.C."/>
            <person name="Fraser C.M."/>
        </authorList>
    </citation>
    <scope>NUCLEOTIDE SEQUENCE [LARGE SCALE GENOMIC DNA]</scope>
    <source>
        <strain>CDC 1551 / Oshkosh</strain>
    </source>
</reference>
<sequence>MNQLPRVGLGTDVHPIEPGRPCWLVGLLFPSADGCAGHSDGDVAVHALCDAVLSAAGLGDIGEVFGVDDPRWQGVSGADMLRHVVVLITQHGYRVGNAVVQVIGNRPKIGWRRLEAQAVLSRLLNAPVSVSATTTDGLGLTGRGEGLAAIATALVVSLR</sequence>
<comment type="function">
    <text evidence="1">Involved in the biosynthesis of isopentenyl diphosphate (IPP) and dimethylallyl diphosphate (DMAPP), two major building blocks of isoprenoid compounds. Catalyzes the conversion of 4-diphosphocytidyl-2-C-methyl-D-erythritol 2-phosphate (CDP-ME2P) to 2-C-methyl-D-erythritol 2,4-cyclodiphosphate (ME-CPP) with a corresponding release of cytidine 5-monophosphate (CMP).</text>
</comment>
<comment type="catalytic activity">
    <reaction evidence="1">
        <text>4-CDP-2-C-methyl-D-erythritol 2-phosphate = 2-C-methyl-D-erythritol 2,4-cyclic diphosphate + CMP</text>
        <dbReference type="Rhea" id="RHEA:23864"/>
        <dbReference type="ChEBI" id="CHEBI:57919"/>
        <dbReference type="ChEBI" id="CHEBI:58483"/>
        <dbReference type="ChEBI" id="CHEBI:60377"/>
        <dbReference type="EC" id="4.6.1.12"/>
    </reaction>
</comment>
<comment type="cofactor">
    <cofactor evidence="1">
        <name>a divalent metal cation</name>
        <dbReference type="ChEBI" id="CHEBI:60240"/>
    </cofactor>
    <text evidence="1">Binds 1 divalent metal cation per subunit.</text>
</comment>
<comment type="pathway">
    <text evidence="1">Isoprenoid biosynthesis; isopentenyl diphosphate biosynthesis via DXP pathway; isopentenyl diphosphate from 1-deoxy-D-xylulose 5-phosphate: step 4/6.</text>
</comment>
<comment type="subunit">
    <text evidence="1">Homotrimer.</text>
</comment>
<comment type="similarity">
    <text evidence="1 2">Belongs to the IspF family.</text>
</comment>
<accession>P9WKG4</accession>
<accession>L0TD81</accession>
<accession>P65183</accession>
<accession>P96863</accession>
<keyword id="KW-0414">Isoprene biosynthesis</keyword>
<keyword id="KW-0456">Lyase</keyword>
<keyword id="KW-0479">Metal-binding</keyword>
<keyword id="KW-1185">Reference proteome</keyword>
<protein>
    <recommendedName>
        <fullName evidence="1">2-C-methyl-D-erythritol 2,4-cyclodiphosphate synthase</fullName>
        <shortName evidence="1">MECDP-synthase</shortName>
        <shortName evidence="1">MECPP-synthase</shortName>
        <shortName evidence="1">MECPS</shortName>
        <ecNumber evidence="1">4.6.1.12</ecNumber>
    </recommendedName>
</protein>